<dbReference type="EC" id="1.1.1.37" evidence="1"/>
<dbReference type="EMBL" id="CP000107">
    <property type="protein sequence ID" value="AAZ68441.1"/>
    <property type="molecule type" value="Genomic_DNA"/>
</dbReference>
<dbReference type="RefSeq" id="WP_011304519.1">
    <property type="nucleotide sequence ID" value="NC_007354.1"/>
</dbReference>
<dbReference type="SMR" id="Q3YS64"/>
<dbReference type="FunCoup" id="Q3YS64">
    <property type="interactions" value="299"/>
</dbReference>
<dbReference type="STRING" id="269484.Ecaj_0398"/>
<dbReference type="KEGG" id="ecn:Ecaj_0398"/>
<dbReference type="eggNOG" id="COG0039">
    <property type="taxonomic scope" value="Bacteria"/>
</dbReference>
<dbReference type="HOGENOM" id="CLU_045401_2_1_5"/>
<dbReference type="InParanoid" id="Q3YS64"/>
<dbReference type="Proteomes" id="UP000000435">
    <property type="component" value="Chromosome"/>
</dbReference>
<dbReference type="GO" id="GO:0004459">
    <property type="term" value="F:L-lactate dehydrogenase activity"/>
    <property type="evidence" value="ECO:0007669"/>
    <property type="project" value="TreeGrafter"/>
</dbReference>
<dbReference type="GO" id="GO:0030060">
    <property type="term" value="F:L-malate dehydrogenase (NAD+) activity"/>
    <property type="evidence" value="ECO:0007669"/>
    <property type="project" value="UniProtKB-UniRule"/>
</dbReference>
<dbReference type="GO" id="GO:0006089">
    <property type="term" value="P:lactate metabolic process"/>
    <property type="evidence" value="ECO:0007669"/>
    <property type="project" value="TreeGrafter"/>
</dbReference>
<dbReference type="GO" id="GO:0006099">
    <property type="term" value="P:tricarboxylic acid cycle"/>
    <property type="evidence" value="ECO:0007669"/>
    <property type="project" value="UniProtKB-UniRule"/>
</dbReference>
<dbReference type="CDD" id="cd01339">
    <property type="entry name" value="LDH-like_MDH"/>
    <property type="match status" value="1"/>
</dbReference>
<dbReference type="FunFam" id="3.40.50.720:FF:000018">
    <property type="entry name" value="Malate dehydrogenase"/>
    <property type="match status" value="1"/>
</dbReference>
<dbReference type="FunFam" id="3.90.110.10:FF:000004">
    <property type="entry name" value="Malate dehydrogenase"/>
    <property type="match status" value="1"/>
</dbReference>
<dbReference type="Gene3D" id="3.90.110.10">
    <property type="entry name" value="Lactate dehydrogenase/glycoside hydrolase, family 4, C-terminal"/>
    <property type="match status" value="1"/>
</dbReference>
<dbReference type="Gene3D" id="3.40.50.720">
    <property type="entry name" value="NAD(P)-binding Rossmann-like Domain"/>
    <property type="match status" value="1"/>
</dbReference>
<dbReference type="HAMAP" id="MF_00487">
    <property type="entry name" value="Malate_dehydrog_3"/>
    <property type="match status" value="1"/>
</dbReference>
<dbReference type="InterPro" id="IPR001557">
    <property type="entry name" value="L-lactate/malate_DH"/>
</dbReference>
<dbReference type="InterPro" id="IPR022383">
    <property type="entry name" value="Lactate/malate_DH_C"/>
</dbReference>
<dbReference type="InterPro" id="IPR001236">
    <property type="entry name" value="Lactate/malate_DH_N"/>
</dbReference>
<dbReference type="InterPro" id="IPR015955">
    <property type="entry name" value="Lactate_DH/Glyco_Ohase_4_C"/>
</dbReference>
<dbReference type="InterPro" id="IPR011275">
    <property type="entry name" value="Malate_DH_type3"/>
</dbReference>
<dbReference type="InterPro" id="IPR036291">
    <property type="entry name" value="NAD(P)-bd_dom_sf"/>
</dbReference>
<dbReference type="NCBIfam" id="TIGR01763">
    <property type="entry name" value="MalateDH_bact"/>
    <property type="match status" value="1"/>
</dbReference>
<dbReference type="NCBIfam" id="NF004863">
    <property type="entry name" value="PRK06223.1"/>
    <property type="match status" value="1"/>
</dbReference>
<dbReference type="PANTHER" id="PTHR43128">
    <property type="entry name" value="L-2-HYDROXYCARBOXYLATE DEHYDROGENASE (NAD(P)(+))"/>
    <property type="match status" value="1"/>
</dbReference>
<dbReference type="PANTHER" id="PTHR43128:SF16">
    <property type="entry name" value="L-LACTATE DEHYDROGENASE"/>
    <property type="match status" value="1"/>
</dbReference>
<dbReference type="Pfam" id="PF02866">
    <property type="entry name" value="Ldh_1_C"/>
    <property type="match status" value="1"/>
</dbReference>
<dbReference type="Pfam" id="PF00056">
    <property type="entry name" value="Ldh_1_N"/>
    <property type="match status" value="1"/>
</dbReference>
<dbReference type="PIRSF" id="PIRSF000102">
    <property type="entry name" value="Lac_mal_DH"/>
    <property type="match status" value="1"/>
</dbReference>
<dbReference type="PRINTS" id="PR00086">
    <property type="entry name" value="LLDHDRGNASE"/>
</dbReference>
<dbReference type="SUPFAM" id="SSF56327">
    <property type="entry name" value="LDH C-terminal domain-like"/>
    <property type="match status" value="1"/>
</dbReference>
<dbReference type="SUPFAM" id="SSF51735">
    <property type="entry name" value="NAD(P)-binding Rossmann-fold domains"/>
    <property type="match status" value="1"/>
</dbReference>
<name>MDH_EHRCJ</name>
<organism>
    <name type="scientific">Ehrlichia canis (strain Jake)</name>
    <dbReference type="NCBI Taxonomy" id="269484"/>
    <lineage>
        <taxon>Bacteria</taxon>
        <taxon>Pseudomonadati</taxon>
        <taxon>Pseudomonadota</taxon>
        <taxon>Alphaproteobacteria</taxon>
        <taxon>Rickettsiales</taxon>
        <taxon>Anaplasmataceae</taxon>
        <taxon>Ehrlichia</taxon>
    </lineage>
</organism>
<gene>
    <name evidence="1" type="primary">mdh</name>
    <name type="ordered locus">Ecaj_0398</name>
</gene>
<protein>
    <recommendedName>
        <fullName evidence="1">Malate dehydrogenase</fullName>
        <ecNumber evidence="1">1.1.1.37</ecNumber>
    </recommendedName>
</protein>
<accession>Q3YS64</accession>
<reference key="1">
    <citation type="journal article" date="2006" name="J. Bacteriol.">
        <title>The genome of the obligately intracellular bacterium Ehrlichia canis reveals themes of complex membrane structure and immune evasion strategies.</title>
        <authorList>
            <person name="Mavromatis K."/>
            <person name="Doyle C.K."/>
            <person name="Lykidis A."/>
            <person name="Ivanova N."/>
            <person name="Francino M.P."/>
            <person name="Chain P."/>
            <person name="Shin M."/>
            <person name="Malfatti S."/>
            <person name="Larimer F."/>
            <person name="Copeland A."/>
            <person name="Detter J.C."/>
            <person name="Land M."/>
            <person name="Richardson P.M."/>
            <person name="Yu X.J."/>
            <person name="Walker D.H."/>
            <person name="McBride J.W."/>
            <person name="Kyrpides N.C."/>
        </authorList>
    </citation>
    <scope>NUCLEOTIDE SEQUENCE [LARGE SCALE GENOMIC DNA]</scope>
    <source>
        <strain>Jake</strain>
    </source>
</reference>
<comment type="function">
    <text evidence="1">Catalyzes the reversible oxidation of malate to oxaloacetate.</text>
</comment>
<comment type="catalytic activity">
    <reaction evidence="1">
        <text>(S)-malate + NAD(+) = oxaloacetate + NADH + H(+)</text>
        <dbReference type="Rhea" id="RHEA:21432"/>
        <dbReference type="ChEBI" id="CHEBI:15378"/>
        <dbReference type="ChEBI" id="CHEBI:15589"/>
        <dbReference type="ChEBI" id="CHEBI:16452"/>
        <dbReference type="ChEBI" id="CHEBI:57540"/>
        <dbReference type="ChEBI" id="CHEBI:57945"/>
        <dbReference type="EC" id="1.1.1.37"/>
    </reaction>
</comment>
<comment type="similarity">
    <text evidence="1">Belongs to the LDH/MDH superfamily. MDH type 3 family.</text>
</comment>
<feature type="chain" id="PRO_0000241947" description="Malate dehydrogenase">
    <location>
        <begin position="1"/>
        <end position="313"/>
    </location>
</feature>
<feature type="active site" description="Proton acceptor" evidence="1">
    <location>
        <position position="177"/>
    </location>
</feature>
<feature type="binding site" evidence="1">
    <location>
        <begin position="11"/>
        <end position="16"/>
    </location>
    <ligand>
        <name>NAD(+)</name>
        <dbReference type="ChEBI" id="CHEBI:57540"/>
    </ligand>
</feature>
<feature type="binding site" evidence="1">
    <location>
        <position position="35"/>
    </location>
    <ligand>
        <name>NAD(+)</name>
        <dbReference type="ChEBI" id="CHEBI:57540"/>
    </ligand>
</feature>
<feature type="binding site" evidence="1">
    <location>
        <position position="84"/>
    </location>
    <ligand>
        <name>substrate</name>
    </ligand>
</feature>
<feature type="binding site" evidence="1">
    <location>
        <position position="90"/>
    </location>
    <ligand>
        <name>substrate</name>
    </ligand>
</feature>
<feature type="binding site" evidence="1">
    <location>
        <position position="97"/>
    </location>
    <ligand>
        <name>NAD(+)</name>
        <dbReference type="ChEBI" id="CHEBI:57540"/>
    </ligand>
</feature>
<feature type="binding site" evidence="1">
    <location>
        <begin position="120"/>
        <end position="122"/>
    </location>
    <ligand>
        <name>NAD(+)</name>
        <dbReference type="ChEBI" id="CHEBI:57540"/>
    </ligand>
</feature>
<feature type="binding site" evidence="1">
    <location>
        <position position="122"/>
    </location>
    <ligand>
        <name>substrate</name>
    </ligand>
</feature>
<feature type="binding site" evidence="1">
    <location>
        <position position="153"/>
    </location>
    <ligand>
        <name>substrate</name>
    </ligand>
</feature>
<keyword id="KW-0520">NAD</keyword>
<keyword id="KW-0560">Oxidoreductase</keyword>
<keyword id="KW-0816">Tricarboxylic acid cycle</keyword>
<proteinExistence type="inferred from homology"/>
<evidence type="ECO:0000255" key="1">
    <source>
        <dbReference type="HAMAP-Rule" id="MF_00487"/>
    </source>
</evidence>
<sequence length="313" mass="33762">MIKRKKIALIGAGNIGGMIAYLIRLKNLGDVVLLDVNDGIAKGKALDMAESSPVGKYNGEILGTNNYADIEGADAIVVTAGITRKPGMSREDLINTNVNIIKEVADNIGKYAPNAFVVVVTNPLDVMVFAMHKYSKLSSNMVVGMAGILDSARFSYFIAKELNVSVDNVNSLVLGGHGDLMLPLVKYSSVAGISIADLIKIDLITQDKVDAIIERTRKGGEEIVSLLKIGSAYYAPAESALLMIDSYLNDRRLILPCSVYLKGEYGVSNLFVGVPVIIGRNGVEKIIELELTEQEKNIFDNSVKLIKNLVSNV</sequence>